<organism>
    <name type="scientific">Candida tropicalis</name>
    <name type="common">Yeast</name>
    <dbReference type="NCBI Taxonomy" id="5482"/>
    <lineage>
        <taxon>Eukaryota</taxon>
        <taxon>Fungi</taxon>
        <taxon>Dikarya</taxon>
        <taxon>Ascomycota</taxon>
        <taxon>Saccharomycotina</taxon>
        <taxon>Pichiomycetes</taxon>
        <taxon>Debaryomycetaceae</taxon>
        <taxon>Candida/Lodderomyces clade</taxon>
        <taxon>Candida</taxon>
    </lineage>
</organism>
<sequence length="551" mass="62449">MSTPFPKTADKVKGVQILGPIPDEAKHIFNQETLAFVATLHRGFEARRQELLNNRKEQQKLRDQGFLPDFLPETEYIRNDSTWTGPALAPGLIDRRCEITGPTDRKMVINALNSNVATYMADFEDSLTPAWKNLVEGQVNLYDAVRRNLSATINGKQYNLNLEKGRHIPTLIVRPRGWHLTEKHVLVDGTPVSGGIFDFAVYFYNSAKEAIAQGFGPYFYLPKMEHHLEAKLWNDIFNYSQDYIGLKRGTIRASVLIETIPAVFQMDEIIYQLREHSAGLNCGRWDYIFSYIKCLRNHPDFILPDRSQVTMAAPFMSSYVKLLVHTTHKRKVHALGGMAAQIPIKDDEARNRAALENVTKDKLREVTLGCDSCWVAHPALVPVVLKVFNEHMKGPNQISLPPKEPFKPITQRDLLSPFVPGAKITEQGIRANIVIGISYIEAWLRNVGCVPINYLMEDAATAEVSRTQIWQWVTHGAKTDTGKVITKEYVKQLLDEEYAKLTKNAKPGNKFKRAFEYFAPEALGEKYSDFVTTLIYDDVTTIGRALPGERL</sequence>
<evidence type="ECO:0000250" key="1"/>
<evidence type="ECO:0000305" key="2"/>
<name>MASY_CANTR</name>
<gene>
    <name type="primary">PMS1</name>
</gene>
<gene>
    <name type="primary">PMS2</name>
</gene>
<comment type="catalytic activity">
    <reaction>
        <text>glyoxylate + acetyl-CoA + H2O = (S)-malate + CoA + H(+)</text>
        <dbReference type="Rhea" id="RHEA:18181"/>
        <dbReference type="ChEBI" id="CHEBI:15377"/>
        <dbReference type="ChEBI" id="CHEBI:15378"/>
        <dbReference type="ChEBI" id="CHEBI:15589"/>
        <dbReference type="ChEBI" id="CHEBI:36655"/>
        <dbReference type="ChEBI" id="CHEBI:57287"/>
        <dbReference type="ChEBI" id="CHEBI:57288"/>
        <dbReference type="EC" id="2.3.3.9"/>
    </reaction>
</comment>
<comment type="pathway">
    <text>Carbohydrate metabolism; glyoxylate cycle; (S)-malate from isocitrate: step 2/2.</text>
</comment>
<comment type="subcellular location">
    <subcellularLocation>
        <location>Glyoxysome</location>
    </subcellularLocation>
</comment>
<comment type="miscellaneous">
    <text>There are two genes for malate synthase in C.tropicalis. The sequence shown is that of PMS1, PMS2 differs at a single position.</text>
</comment>
<comment type="similarity">
    <text evidence="2">Belongs to the malate synthase family.</text>
</comment>
<keyword id="KW-0329">Glyoxylate bypass</keyword>
<keyword id="KW-0330">Glyoxysome</keyword>
<keyword id="KW-0576">Peroxisome</keyword>
<keyword id="KW-0808">Transferase</keyword>
<keyword id="KW-0816">Tricarboxylic acid cycle</keyword>
<accession>Q02216</accession>
<feature type="chain" id="PRO_0000166860" description="Malate synthase, glyoxysomal">
    <location>
        <begin position="1"/>
        <end position="551"/>
    </location>
</feature>
<feature type="active site" description="Proton acceptor" evidence="1">
    <location>
        <position position="174"/>
    </location>
</feature>
<feature type="active site" description="Proton donor" evidence="1">
    <location>
        <position position="458"/>
    </location>
</feature>
<feature type="sequence variant" description="In PMS2.">
    <original>N</original>
    <variation>S</variation>
    <location>
        <position position="159"/>
    </location>
</feature>
<proteinExistence type="inferred from homology"/>
<protein>
    <recommendedName>
        <fullName>Malate synthase, glyoxysomal</fullName>
        <ecNumber>2.3.3.9</ecNumber>
    </recommendedName>
</protein>
<dbReference type="EC" id="2.3.3.9"/>
<dbReference type="EMBL" id="D13415">
    <property type="protein sequence ID" value="BAA02680.1"/>
    <property type="molecule type" value="Genomic_DNA"/>
</dbReference>
<dbReference type="EMBL" id="D13416">
    <property type="protein sequence ID" value="BAA02681.1"/>
    <property type="molecule type" value="Genomic_DNA"/>
</dbReference>
<dbReference type="PIR" id="JX0195">
    <property type="entry name" value="JX0195"/>
</dbReference>
<dbReference type="PIR" id="JX0196">
    <property type="entry name" value="JX0196"/>
</dbReference>
<dbReference type="SMR" id="Q02216"/>
<dbReference type="VEuPathDB" id="FungiDB:CTMYA2_005440"/>
<dbReference type="VEuPathDB" id="FungiDB:CTRG_03389"/>
<dbReference type="UniPathway" id="UPA00703">
    <property type="reaction ID" value="UER00720"/>
</dbReference>
<dbReference type="GO" id="GO:0009514">
    <property type="term" value="C:glyoxysome"/>
    <property type="evidence" value="ECO:0007669"/>
    <property type="project" value="UniProtKB-SubCell"/>
</dbReference>
<dbReference type="GO" id="GO:0005782">
    <property type="term" value="C:peroxisomal matrix"/>
    <property type="evidence" value="ECO:0007669"/>
    <property type="project" value="TreeGrafter"/>
</dbReference>
<dbReference type="GO" id="GO:0004474">
    <property type="term" value="F:malate synthase activity"/>
    <property type="evidence" value="ECO:0007669"/>
    <property type="project" value="UniProtKB-EC"/>
</dbReference>
<dbReference type="GO" id="GO:0006097">
    <property type="term" value="P:glyoxylate cycle"/>
    <property type="evidence" value="ECO:0007669"/>
    <property type="project" value="UniProtKB-UniPathway"/>
</dbReference>
<dbReference type="GO" id="GO:0006099">
    <property type="term" value="P:tricarboxylic acid cycle"/>
    <property type="evidence" value="ECO:0007669"/>
    <property type="project" value="UniProtKB-KW"/>
</dbReference>
<dbReference type="CDD" id="cd00727">
    <property type="entry name" value="malate_synt_A"/>
    <property type="match status" value="1"/>
</dbReference>
<dbReference type="FunFam" id="1.20.1220.12:FF:000001">
    <property type="entry name" value="Malate synthase"/>
    <property type="match status" value="1"/>
</dbReference>
<dbReference type="FunFam" id="3.20.20.360:FF:000001">
    <property type="entry name" value="Malate synthase"/>
    <property type="match status" value="1"/>
</dbReference>
<dbReference type="Gene3D" id="3.20.20.360">
    <property type="entry name" value="Malate synthase, domain 3"/>
    <property type="match status" value="1"/>
</dbReference>
<dbReference type="Gene3D" id="1.20.1220.12">
    <property type="entry name" value="Malate synthase, domain III"/>
    <property type="match status" value="1"/>
</dbReference>
<dbReference type="InterPro" id="IPR044856">
    <property type="entry name" value="Malate_synth_C_sf"/>
</dbReference>
<dbReference type="InterPro" id="IPR011076">
    <property type="entry name" value="Malate_synth_sf"/>
</dbReference>
<dbReference type="InterPro" id="IPR006252">
    <property type="entry name" value="Malate_synthA"/>
</dbReference>
<dbReference type="InterPro" id="IPR019830">
    <property type="entry name" value="Malate_synthase_CS"/>
</dbReference>
<dbReference type="InterPro" id="IPR001465">
    <property type="entry name" value="Malate_synthase_TIM"/>
</dbReference>
<dbReference type="InterPro" id="IPR048355">
    <property type="entry name" value="MS_C"/>
</dbReference>
<dbReference type="InterPro" id="IPR048356">
    <property type="entry name" value="MS_N"/>
</dbReference>
<dbReference type="InterPro" id="IPR046363">
    <property type="entry name" value="MS_N_TIM-barrel_dom"/>
</dbReference>
<dbReference type="NCBIfam" id="TIGR01344">
    <property type="entry name" value="malate_syn_A"/>
    <property type="match status" value="1"/>
</dbReference>
<dbReference type="PANTHER" id="PTHR42902">
    <property type="entry name" value="MALATE SYNTHASE"/>
    <property type="match status" value="1"/>
</dbReference>
<dbReference type="PANTHER" id="PTHR42902:SF1">
    <property type="entry name" value="MALATE SYNTHASE 1-RELATED"/>
    <property type="match status" value="1"/>
</dbReference>
<dbReference type="Pfam" id="PF20659">
    <property type="entry name" value="MS_C"/>
    <property type="match status" value="1"/>
</dbReference>
<dbReference type="Pfam" id="PF20656">
    <property type="entry name" value="MS_N"/>
    <property type="match status" value="1"/>
</dbReference>
<dbReference type="Pfam" id="PF01274">
    <property type="entry name" value="MS_TIM-barrel"/>
    <property type="match status" value="1"/>
</dbReference>
<dbReference type="PIRSF" id="PIRSF001363">
    <property type="entry name" value="Malate_synth"/>
    <property type="match status" value="1"/>
</dbReference>
<dbReference type="SUPFAM" id="SSF51645">
    <property type="entry name" value="Malate synthase G"/>
    <property type="match status" value="1"/>
</dbReference>
<dbReference type="PROSITE" id="PS00510">
    <property type="entry name" value="MALATE_SYNTHASE"/>
    <property type="match status" value="1"/>
</dbReference>
<reference key="1">
    <citation type="journal article" date="1991" name="J. Biochem.">
        <title>Presence of two transcribed malate synthase genes in an n-alkane-utilizing yeast, Candida tropicalis.</title>
        <authorList>
            <person name="Hikada M."/>
            <person name="Atomi H."/>
            <person name="Fukuda Y."/>
            <person name="Aoki A."/>
            <person name="Hishida T."/>
            <person name="Teranishi Y."/>
            <person name="Ueda M."/>
            <person name="Tanaka A."/>
        </authorList>
    </citation>
    <scope>NUCLEOTIDE SEQUENCE [GENOMIC DNA]</scope>
</reference>